<accession>A2CHX2</accession>
<sequence>MIKSDPDVEVYALGKHIRMSAHKARRVIDQIRGRPYEETLMILELMPYRACYPILKLVYSAAANASHNMGFNETALIISQAEVNEGTITKKLKPRARGRSFAIKRPTCHITIVLQDISKDKKYFIWLRKYGWIYKDKYTDVRERYLYMMDHMLYRNRMTWINREMIWPYRDSEVLWDKK</sequence>
<organism>
    <name type="scientific">Ranunculus macranthus</name>
    <name type="common">Large buttercup</name>
    <dbReference type="NCBI Taxonomy" id="334596"/>
    <lineage>
        <taxon>Eukaryota</taxon>
        <taxon>Viridiplantae</taxon>
        <taxon>Streptophyta</taxon>
        <taxon>Embryophyta</taxon>
        <taxon>Tracheophyta</taxon>
        <taxon>Spermatophyta</taxon>
        <taxon>Magnoliopsida</taxon>
        <taxon>Ranunculales</taxon>
        <taxon>Ranunculaceae</taxon>
        <taxon>Ranunculoideae</taxon>
        <taxon>Ranunculeae</taxon>
        <taxon>Ranunculus</taxon>
    </lineage>
</organism>
<gene>
    <name type="primary">rpl22</name>
</gene>
<comment type="function">
    <text evidence="1">This protein binds specifically to 23S rRNA.</text>
</comment>
<comment type="function">
    <text evidence="1">The globular domain of the protein is located near the polypeptide exit tunnel on the outside of the subunit, while an extended beta-hairpin is found that lines the wall of the exit tunnel in the center of the 70S ribosome.</text>
</comment>
<comment type="subunit">
    <text evidence="1">Part of the 50S ribosomal subunit.</text>
</comment>
<comment type="subcellular location">
    <subcellularLocation>
        <location>Plastid</location>
        <location>Chloroplast</location>
    </subcellularLocation>
</comment>
<comment type="similarity">
    <text evidence="2">Belongs to the universal ribosomal protein uL22 family.</text>
</comment>
<feature type="chain" id="PRO_0000354593" description="Large ribosomal subunit protein uL22c">
    <location>
        <begin position="1"/>
        <end position="179"/>
    </location>
</feature>
<dbReference type="EMBL" id="DQ359689">
    <property type="protein sequence ID" value="ABM90427.1"/>
    <property type="molecule type" value="Genomic_DNA"/>
</dbReference>
<dbReference type="RefSeq" id="YP_001019178.1">
    <property type="nucleotide sequence ID" value="NC_008796.1"/>
</dbReference>
<dbReference type="SMR" id="A2CHX2"/>
<dbReference type="GeneID" id="4783341"/>
<dbReference type="GO" id="GO:0009507">
    <property type="term" value="C:chloroplast"/>
    <property type="evidence" value="ECO:0007669"/>
    <property type="project" value="UniProtKB-SubCell"/>
</dbReference>
<dbReference type="GO" id="GO:0015934">
    <property type="term" value="C:large ribosomal subunit"/>
    <property type="evidence" value="ECO:0007669"/>
    <property type="project" value="InterPro"/>
</dbReference>
<dbReference type="GO" id="GO:0019843">
    <property type="term" value="F:rRNA binding"/>
    <property type="evidence" value="ECO:0007669"/>
    <property type="project" value="UniProtKB-UniRule"/>
</dbReference>
<dbReference type="GO" id="GO:0003735">
    <property type="term" value="F:structural constituent of ribosome"/>
    <property type="evidence" value="ECO:0007669"/>
    <property type="project" value="InterPro"/>
</dbReference>
<dbReference type="GO" id="GO:0006412">
    <property type="term" value="P:translation"/>
    <property type="evidence" value="ECO:0007669"/>
    <property type="project" value="UniProtKB-UniRule"/>
</dbReference>
<dbReference type="CDD" id="cd00336">
    <property type="entry name" value="Ribosomal_L22"/>
    <property type="match status" value="1"/>
</dbReference>
<dbReference type="FunFam" id="3.90.470.10:FF:000006">
    <property type="entry name" value="50S ribosomal protein L22, chloroplastic"/>
    <property type="match status" value="1"/>
</dbReference>
<dbReference type="Gene3D" id="3.90.470.10">
    <property type="entry name" value="Ribosomal protein L22/L17"/>
    <property type="match status" value="1"/>
</dbReference>
<dbReference type="HAMAP" id="MF_01331_B">
    <property type="entry name" value="Ribosomal_uL22_B"/>
    <property type="match status" value="1"/>
</dbReference>
<dbReference type="InterPro" id="IPR001063">
    <property type="entry name" value="Ribosomal_uL22"/>
</dbReference>
<dbReference type="InterPro" id="IPR005727">
    <property type="entry name" value="Ribosomal_uL22_bac/chlpt-type"/>
</dbReference>
<dbReference type="InterPro" id="IPR047867">
    <property type="entry name" value="Ribosomal_uL22_bac/org-type"/>
</dbReference>
<dbReference type="InterPro" id="IPR018260">
    <property type="entry name" value="Ribosomal_uL22_CS"/>
</dbReference>
<dbReference type="InterPro" id="IPR036394">
    <property type="entry name" value="Ribosomal_uL22_sf"/>
</dbReference>
<dbReference type="NCBIfam" id="TIGR01044">
    <property type="entry name" value="rplV_bact"/>
    <property type="match status" value="1"/>
</dbReference>
<dbReference type="PANTHER" id="PTHR13501">
    <property type="entry name" value="CHLOROPLAST 50S RIBOSOMAL PROTEIN L22-RELATED"/>
    <property type="match status" value="1"/>
</dbReference>
<dbReference type="PANTHER" id="PTHR13501:SF10">
    <property type="entry name" value="LARGE RIBOSOMAL SUBUNIT PROTEIN UL22M"/>
    <property type="match status" value="1"/>
</dbReference>
<dbReference type="Pfam" id="PF00237">
    <property type="entry name" value="Ribosomal_L22"/>
    <property type="match status" value="1"/>
</dbReference>
<dbReference type="SUPFAM" id="SSF54843">
    <property type="entry name" value="Ribosomal protein L22"/>
    <property type="match status" value="1"/>
</dbReference>
<dbReference type="PROSITE" id="PS00464">
    <property type="entry name" value="RIBOSOMAL_L22"/>
    <property type="match status" value="1"/>
</dbReference>
<evidence type="ECO:0000250" key="1"/>
<evidence type="ECO:0000305" key="2"/>
<keyword id="KW-0150">Chloroplast</keyword>
<keyword id="KW-0934">Plastid</keyword>
<keyword id="KW-0687">Ribonucleoprotein</keyword>
<keyword id="KW-0689">Ribosomal protein</keyword>
<keyword id="KW-0694">RNA-binding</keyword>
<keyword id="KW-0699">rRNA-binding</keyword>
<proteinExistence type="inferred from homology"/>
<protein>
    <recommendedName>
        <fullName evidence="2">Large ribosomal subunit protein uL22c</fullName>
    </recommendedName>
    <alternativeName>
        <fullName>50S ribosomal protein L22, chloroplastic</fullName>
    </alternativeName>
</protein>
<reference key="1">
    <citation type="journal article" date="2007" name="BMC Genomics">
        <title>Comparative chloroplast genomics: analyses including new sequences from the angiosperms Nuphar advena and Ranunculus macranthus.</title>
        <authorList>
            <person name="Raubeson L.A."/>
            <person name="Peery R."/>
            <person name="Chumley T.W."/>
            <person name="Dziubek C."/>
            <person name="Fourcade H.M."/>
            <person name="Boore J.L."/>
            <person name="Jansen R.K."/>
        </authorList>
    </citation>
    <scope>NUCLEOTIDE SEQUENCE [LARGE SCALE GENOMIC DNA]</scope>
</reference>
<name>RK22_RANMC</name>
<geneLocation type="chloroplast"/>